<protein>
    <recommendedName>
        <fullName>RUS family member 1</fullName>
    </recommendedName>
</protein>
<feature type="chain" id="PRO_0000356846" description="RUS family member 1">
    <location>
        <begin position="1"/>
        <end position="527"/>
    </location>
</feature>
<feature type="transmembrane region" description="Helical" evidence="1">
    <location>
        <begin position="220"/>
        <end position="240"/>
    </location>
</feature>
<feature type="transmembrane region" description="Helical" evidence="1">
    <location>
        <begin position="245"/>
        <end position="265"/>
    </location>
</feature>
<feature type="region of interest" description="Disordered" evidence="2">
    <location>
        <begin position="350"/>
        <end position="426"/>
    </location>
</feature>
<feature type="glycosylation site" description="N-linked (GlcNAc...) asparagine" evidence="1">
    <location>
        <position position="21"/>
    </location>
</feature>
<feature type="glycosylation site" description="N-linked (GlcNAc...) asparagine" evidence="1">
    <location>
        <position position="243"/>
    </location>
</feature>
<feature type="glycosylation site" description="N-linked (GlcNAc...) asparagine" evidence="1">
    <location>
        <position position="346"/>
    </location>
</feature>
<feature type="glycosylation site" description="N-linked (GlcNAc...) asparagine" evidence="1">
    <location>
        <position position="467"/>
    </location>
</feature>
<feature type="glycosylation site" description="N-linked (GlcNAc...) asparagine" evidence="1">
    <location>
        <position position="497"/>
    </location>
</feature>
<accession>Q86K80</accession>
<accession>Q550A9</accession>
<evidence type="ECO:0000255" key="1"/>
<evidence type="ECO:0000256" key="2">
    <source>
        <dbReference type="SAM" id="MobiDB-lite"/>
    </source>
</evidence>
<evidence type="ECO:0000269" key="3">
    <source>
    </source>
</evidence>
<evidence type="ECO:0000305" key="4"/>
<gene>
    <name type="primary">rusf1</name>
    <name type="ORF">DDB_G0277179</name>
</gene>
<name>RUSF1_DICDI</name>
<reference key="1">
    <citation type="journal article" date="2002" name="Nature">
        <title>Sequence and analysis of chromosome 2 of Dictyostelium discoideum.</title>
        <authorList>
            <person name="Gloeckner G."/>
            <person name="Eichinger L."/>
            <person name="Szafranski K."/>
            <person name="Pachebat J.A."/>
            <person name="Bankier A.T."/>
            <person name="Dear P.H."/>
            <person name="Lehmann R."/>
            <person name="Baumgart C."/>
            <person name="Parra G."/>
            <person name="Abril J.F."/>
            <person name="Guigo R."/>
            <person name="Kumpf K."/>
            <person name="Tunggal B."/>
            <person name="Cox E.C."/>
            <person name="Quail M.A."/>
            <person name="Platzer M."/>
            <person name="Rosenthal A."/>
            <person name="Noegel A.A."/>
        </authorList>
    </citation>
    <scope>NUCLEOTIDE SEQUENCE [LARGE SCALE GENOMIC DNA]</scope>
    <source>
        <strain>AX4</strain>
    </source>
</reference>
<reference key="2">
    <citation type="journal article" date="2005" name="Nature">
        <title>The genome of the social amoeba Dictyostelium discoideum.</title>
        <authorList>
            <person name="Eichinger L."/>
            <person name="Pachebat J.A."/>
            <person name="Gloeckner G."/>
            <person name="Rajandream M.A."/>
            <person name="Sucgang R."/>
            <person name="Berriman M."/>
            <person name="Song J."/>
            <person name="Olsen R."/>
            <person name="Szafranski K."/>
            <person name="Xu Q."/>
            <person name="Tunggal B."/>
            <person name="Kummerfeld S."/>
            <person name="Madera M."/>
            <person name="Konfortov B.A."/>
            <person name="Rivero F."/>
            <person name="Bankier A.T."/>
            <person name="Lehmann R."/>
            <person name="Hamlin N."/>
            <person name="Davies R."/>
            <person name="Gaudet P."/>
            <person name="Fey P."/>
            <person name="Pilcher K."/>
            <person name="Chen G."/>
            <person name="Saunders D."/>
            <person name="Sodergren E.J."/>
            <person name="Davis P."/>
            <person name="Kerhornou A."/>
            <person name="Nie X."/>
            <person name="Hall N."/>
            <person name="Anjard C."/>
            <person name="Hemphill L."/>
            <person name="Bason N."/>
            <person name="Farbrother P."/>
            <person name="Desany B."/>
            <person name="Just E."/>
            <person name="Morio T."/>
            <person name="Rost R."/>
            <person name="Churcher C.M."/>
            <person name="Cooper J."/>
            <person name="Haydock S."/>
            <person name="van Driessche N."/>
            <person name="Cronin A."/>
            <person name="Goodhead I."/>
            <person name="Muzny D.M."/>
            <person name="Mourier T."/>
            <person name="Pain A."/>
            <person name="Lu M."/>
            <person name="Harper D."/>
            <person name="Lindsay R."/>
            <person name="Hauser H."/>
            <person name="James K.D."/>
            <person name="Quiles M."/>
            <person name="Madan Babu M."/>
            <person name="Saito T."/>
            <person name="Buchrieser C."/>
            <person name="Wardroper A."/>
            <person name="Felder M."/>
            <person name="Thangavelu M."/>
            <person name="Johnson D."/>
            <person name="Knights A."/>
            <person name="Loulseged H."/>
            <person name="Mungall K.L."/>
            <person name="Oliver K."/>
            <person name="Price C."/>
            <person name="Quail M.A."/>
            <person name="Urushihara H."/>
            <person name="Hernandez J."/>
            <person name="Rabbinowitsch E."/>
            <person name="Steffen D."/>
            <person name="Sanders M."/>
            <person name="Ma J."/>
            <person name="Kohara Y."/>
            <person name="Sharp S."/>
            <person name="Simmonds M.N."/>
            <person name="Spiegler S."/>
            <person name="Tivey A."/>
            <person name="Sugano S."/>
            <person name="White B."/>
            <person name="Walker D."/>
            <person name="Woodward J.R."/>
            <person name="Winckler T."/>
            <person name="Tanaka Y."/>
            <person name="Shaulsky G."/>
            <person name="Schleicher M."/>
            <person name="Weinstock G.M."/>
            <person name="Rosenthal A."/>
            <person name="Cox E.C."/>
            <person name="Chisholm R.L."/>
            <person name="Gibbs R.A."/>
            <person name="Loomis W.F."/>
            <person name="Platzer M."/>
            <person name="Kay R.R."/>
            <person name="Williams J.G."/>
            <person name="Dear P.H."/>
            <person name="Noegel A.A."/>
            <person name="Barrell B.G."/>
            <person name="Kuspa A."/>
        </authorList>
    </citation>
    <scope>NUCLEOTIDE SEQUENCE [LARGE SCALE GENOMIC DNA]</scope>
    <source>
        <strain>AX4</strain>
    </source>
</reference>
<reference key="3">
    <citation type="journal article" date="2006" name="J. Cell Sci.">
        <title>Functional genomics in Dictyostelium: midA, a new conserved protein, is required for mitochondrial function and development.</title>
        <authorList>
            <person name="Torija P."/>
            <person name="Vicente J.J."/>
            <person name="Rodrigues T.B."/>
            <person name="Robles A."/>
            <person name="Cerdan S."/>
            <person name="Sastre L."/>
            <person name="Calvo R.M."/>
            <person name="Escalante R."/>
        </authorList>
    </citation>
    <scope>DISRUPTION PHENOTYPE</scope>
</reference>
<proteinExistence type="inferred from homology"/>
<keyword id="KW-0325">Glycoprotein</keyword>
<keyword id="KW-0472">Membrane</keyword>
<keyword id="KW-1185">Reference proteome</keyword>
<keyword id="KW-0812">Transmembrane</keyword>
<keyword id="KW-1133">Transmembrane helix</keyword>
<dbReference type="EMBL" id="AAFI02000019">
    <property type="protein sequence ID" value="EAL68775.1"/>
    <property type="molecule type" value="Genomic_DNA"/>
</dbReference>
<dbReference type="RefSeq" id="XP_642707.1">
    <property type="nucleotide sequence ID" value="XM_637615.1"/>
</dbReference>
<dbReference type="FunCoup" id="Q86K80">
    <property type="interactions" value="2"/>
</dbReference>
<dbReference type="GlyCosmos" id="Q86K80">
    <property type="glycosylation" value="5 sites, No reported glycans"/>
</dbReference>
<dbReference type="GlyGen" id="Q86K80">
    <property type="glycosylation" value="5 sites"/>
</dbReference>
<dbReference type="PaxDb" id="44689-DDB0232151"/>
<dbReference type="EnsemblProtists" id="EAL68775">
    <property type="protein sequence ID" value="EAL68775"/>
    <property type="gene ID" value="DDB_G0277179"/>
</dbReference>
<dbReference type="GeneID" id="8620899"/>
<dbReference type="KEGG" id="ddi:DDB_G0277179"/>
<dbReference type="dictyBase" id="DDB_G0277179"/>
<dbReference type="VEuPathDB" id="AmoebaDB:DDB_G0277179"/>
<dbReference type="eggNOG" id="KOG4249">
    <property type="taxonomic scope" value="Eukaryota"/>
</dbReference>
<dbReference type="HOGENOM" id="CLU_517245_0_0_1"/>
<dbReference type="InParanoid" id="Q86K80"/>
<dbReference type="OMA" id="MIESYFY"/>
<dbReference type="PhylomeDB" id="Q86K80"/>
<dbReference type="PRO" id="PR:Q86K80"/>
<dbReference type="Proteomes" id="UP000002195">
    <property type="component" value="Chromosome 2"/>
</dbReference>
<dbReference type="GO" id="GO:0016020">
    <property type="term" value="C:membrane"/>
    <property type="evidence" value="ECO:0007669"/>
    <property type="project" value="UniProtKB-SubCell"/>
</dbReference>
<dbReference type="InterPro" id="IPR006968">
    <property type="entry name" value="RUS_fam"/>
</dbReference>
<dbReference type="InterPro" id="IPR054549">
    <property type="entry name" value="UVB_sens_RUS_dom"/>
</dbReference>
<dbReference type="PANTHER" id="PTHR12770:SF21">
    <property type="entry name" value="RUS FAMILY MEMBER 1"/>
    <property type="match status" value="1"/>
</dbReference>
<dbReference type="PANTHER" id="PTHR12770">
    <property type="entry name" value="RUS1 FAMILY PROTEIN C16ORF58"/>
    <property type="match status" value="1"/>
</dbReference>
<dbReference type="Pfam" id="PF04884">
    <property type="entry name" value="UVB_sens_prot"/>
    <property type="match status" value="1"/>
</dbReference>
<sequence length="527" mass="59685">MQYNGKSQQSINKINCIIEKNQSNSIINKFQVASPYDDYDDRLNFLETIEKNSGFYNVLCELFLPNGYPDSVTTDYFGYQFWDSIQALCSTITGTLATRAILKGYGVGDSSATVASATTQWLIRDGMGMIGRIVFAWRKGTDLDCNSKKWRYTADILNNIGMAFEMISPLFSSQLFLPLSCIGLIAKSICGVAGGCTKASLTQHFAKRDNLADVSAKDGSQETAVNLVGMLLSVIVSSFINDNTSLIVTWLVFLFFTSLHLFCNYRAVSAVQLKSINRYRAYLIYDYFIHNQGSIPSPSEISKLENILFSIKELDIRVGVSLCNIYKVQQKQQKLNNQFLQQKLNNITKTKNVNNNNNNNNNNNNNNNNNNNNKNNNINNINNNINNNINNNINNNINNKNNNNNNNNNNNNNNNNNNNNNNNNNKNSLEIIKKIKKSKSFIIWKKHSQRGNKILEKDFTLLIALLNGSTTRDMIESYFYAVEYFHLSSVQIPPTINISGTFFKRLEEKGWDLDRALLNSEGWTFGI</sequence>
<comment type="subcellular location">
    <subcellularLocation>
        <location evidence="4">Membrane</location>
        <topology evidence="4">Multi-pass membrane protein</topology>
    </subcellularLocation>
</comment>
<comment type="disruption phenotype">
    <text evidence="3">No visible phenotype.</text>
</comment>
<comment type="similarity">
    <text evidence="4">Belongs to the RUS1 family.</text>
</comment>
<organism>
    <name type="scientific">Dictyostelium discoideum</name>
    <name type="common">Social amoeba</name>
    <dbReference type="NCBI Taxonomy" id="44689"/>
    <lineage>
        <taxon>Eukaryota</taxon>
        <taxon>Amoebozoa</taxon>
        <taxon>Evosea</taxon>
        <taxon>Eumycetozoa</taxon>
        <taxon>Dictyostelia</taxon>
        <taxon>Dictyosteliales</taxon>
        <taxon>Dictyosteliaceae</taxon>
        <taxon>Dictyostelium</taxon>
    </lineage>
</organism>